<evidence type="ECO:0000250" key="1">
    <source>
        <dbReference type="UniProtKB" id="P0ACB0"/>
    </source>
</evidence>
<evidence type="ECO:0000255" key="2">
    <source>
        <dbReference type="PROSITE-ProRule" id="PRU00596"/>
    </source>
</evidence>
<evidence type="ECO:0000305" key="3"/>
<keyword id="KW-0067">ATP-binding</keyword>
<keyword id="KW-0150">Chloroplast</keyword>
<keyword id="KW-0235">DNA replication</keyword>
<keyword id="KW-0238">DNA-binding</keyword>
<keyword id="KW-0347">Helicase</keyword>
<keyword id="KW-0378">Hydrolase</keyword>
<keyword id="KW-0413">Isomerase</keyword>
<keyword id="KW-0547">Nucleotide-binding</keyword>
<keyword id="KW-0934">Plastid</keyword>
<keyword id="KW-0639">Primosome</keyword>
<sequence>MEKINLKTGRLIVEKYLPHNFLAEKIVLSSLLISSEAIETCLRSLTIDAFYFKNHREIYKAILIMYKKNTPIDIVTLNTFLQNQGLLPKIGGIKVLIELVNQLPNLVYLEEYIRIIQDKYVRRSLIKLGYEAINSGYITNISLEEILISLEKQMFSLTNEIKNQDVFSSVDLFSQILLELKYKSSKPVLAGLSSGFYDLDSLTQGFQKSDLIIIAGRPSMGKTAFCLNIATNIVKKYKLPILFFSLEMSKEQLAYRLLSAEALINPMRLRNGHLNKKDWLKLHRIIKNLSSLPFFIDDTPNLSIQAIRSKVKKLLFEQNTIGLVVIDYLQLMQSSTLKSSNRVQELSQITRSLKNIAREFNVPVIALSQLSRNVENRIIKRPILSDLRESGSIEQDADLVLMLYRDQYYNSNNENDEQLDITELILAKQRNGPIGTIQLKFDANYTKFFDYILKD</sequence>
<comment type="function">
    <text evidence="1">A replicative DNA helicase, it participates in initiation and elongation during chromosome replication. Travels ahead of the DNA replisome, separating dsDNA into templates for DNA synthesis. A processive ATP-dependent 5'-3' DNA helicase it has DNA-dependent ATPase activity.</text>
</comment>
<comment type="catalytic activity">
    <reaction evidence="1">
        <text>Couples ATP hydrolysis with the unwinding of duplex DNA at the replication fork by translocating in the 5'-3' direction. This creates two antiparallel DNA single strands (ssDNA). The leading ssDNA polymer is the template for DNA polymerase III holoenzyme which synthesizes a continuous strand.</text>
        <dbReference type="EC" id="5.6.2.3"/>
    </reaction>
</comment>
<comment type="catalytic activity">
    <reaction evidence="1">
        <text>ATP + H2O = ADP + phosphate + H(+)</text>
        <dbReference type="Rhea" id="RHEA:13065"/>
        <dbReference type="ChEBI" id="CHEBI:15377"/>
        <dbReference type="ChEBI" id="CHEBI:15378"/>
        <dbReference type="ChEBI" id="CHEBI:30616"/>
        <dbReference type="ChEBI" id="CHEBI:43474"/>
        <dbReference type="ChEBI" id="CHEBI:456216"/>
        <dbReference type="EC" id="5.6.2.3"/>
    </reaction>
</comment>
<comment type="subunit">
    <text evidence="1">Homohexamer.</text>
</comment>
<comment type="subcellular location">
    <subcellularLocation>
        <location>Plastid</location>
        <location>Chloroplast</location>
    </subcellularLocation>
</comment>
<comment type="similarity">
    <text evidence="3">Belongs to the helicase family. DnaB subfamily.</text>
</comment>
<gene>
    <name type="primary">dnaB</name>
</gene>
<organism>
    <name type="scientific">Trieres chinensis</name>
    <name type="common">Marine centric diatom</name>
    <name type="synonym">Odontella sinensis</name>
    <dbReference type="NCBI Taxonomy" id="1514140"/>
    <lineage>
        <taxon>Eukaryota</taxon>
        <taxon>Sar</taxon>
        <taxon>Stramenopiles</taxon>
        <taxon>Ochrophyta</taxon>
        <taxon>Bacillariophyta</taxon>
        <taxon>Mediophyceae</taxon>
        <taxon>Biddulphiophycidae</taxon>
        <taxon>Eupodiscales</taxon>
        <taxon>Parodontellaceae</taxon>
        <taxon>Trieres</taxon>
    </lineage>
</organism>
<feature type="chain" id="PRO_0000102035" description="Probable replicative DNA helicase">
    <location>
        <begin position="1"/>
        <end position="455"/>
    </location>
</feature>
<feature type="domain" description="SF4 helicase" evidence="2">
    <location>
        <begin position="185"/>
        <end position="455"/>
    </location>
</feature>
<feature type="binding site" evidence="2">
    <location>
        <begin position="216"/>
        <end position="223"/>
    </location>
    <ligand>
        <name>ATP</name>
        <dbReference type="ChEBI" id="CHEBI:30616"/>
    </ligand>
</feature>
<reference key="1">
    <citation type="journal article" date="1995" name="Plant Mol. Biol. Rep.">
        <title>The chloroplast genome of a chlorophyll a+c-containing alga, Odontella sinensis.</title>
        <authorList>
            <person name="Kowallik K.V."/>
            <person name="Stoebe B."/>
            <person name="Schaffran I."/>
            <person name="Kroth-Pancic P."/>
            <person name="Freier U."/>
        </authorList>
    </citation>
    <scope>NUCLEOTIDE SEQUENCE [LARGE SCALE GENOMIC DNA]</scope>
</reference>
<protein>
    <recommendedName>
        <fullName>Probable replicative DNA helicase</fullName>
        <ecNumber evidence="1">5.6.2.3</ecNumber>
    </recommendedName>
    <alternativeName>
        <fullName evidence="3">DNA 5'-3' helicase DnaB</fullName>
    </alternativeName>
</protein>
<accession>P49519</accession>
<dbReference type="EC" id="5.6.2.3" evidence="1"/>
<dbReference type="EMBL" id="Z67753">
    <property type="protein sequence ID" value="CAA91729.1"/>
    <property type="molecule type" value="Genomic_DNA"/>
</dbReference>
<dbReference type="PIR" id="S78356">
    <property type="entry name" value="S78356"/>
</dbReference>
<dbReference type="RefSeq" id="NP_043697.1">
    <property type="nucleotide sequence ID" value="NC_001713.1"/>
</dbReference>
<dbReference type="SMR" id="P49519"/>
<dbReference type="GeneID" id="801784"/>
<dbReference type="GO" id="GO:0009507">
    <property type="term" value="C:chloroplast"/>
    <property type="evidence" value="ECO:0007669"/>
    <property type="project" value="UniProtKB-SubCell"/>
</dbReference>
<dbReference type="GO" id="GO:0005829">
    <property type="term" value="C:cytosol"/>
    <property type="evidence" value="ECO:0007669"/>
    <property type="project" value="TreeGrafter"/>
</dbReference>
<dbReference type="GO" id="GO:0005524">
    <property type="term" value="F:ATP binding"/>
    <property type="evidence" value="ECO:0007669"/>
    <property type="project" value="UniProtKB-KW"/>
</dbReference>
<dbReference type="GO" id="GO:0016887">
    <property type="term" value="F:ATP hydrolysis activity"/>
    <property type="evidence" value="ECO:0007669"/>
    <property type="project" value="InterPro"/>
</dbReference>
<dbReference type="GO" id="GO:0003677">
    <property type="term" value="F:DNA binding"/>
    <property type="evidence" value="ECO:0007669"/>
    <property type="project" value="UniProtKB-KW"/>
</dbReference>
<dbReference type="GO" id="GO:0003678">
    <property type="term" value="F:DNA helicase activity"/>
    <property type="evidence" value="ECO:0007669"/>
    <property type="project" value="InterPro"/>
</dbReference>
<dbReference type="GO" id="GO:0006269">
    <property type="term" value="P:DNA replication, synthesis of primer"/>
    <property type="evidence" value="ECO:0007669"/>
    <property type="project" value="UniProtKB-KW"/>
</dbReference>
<dbReference type="CDD" id="cd00984">
    <property type="entry name" value="DnaB_C"/>
    <property type="match status" value="1"/>
</dbReference>
<dbReference type="FunFam" id="3.40.50.300:FF:001761">
    <property type="entry name" value="Replicative DNA helicase"/>
    <property type="match status" value="1"/>
</dbReference>
<dbReference type="Gene3D" id="1.10.860.10">
    <property type="entry name" value="DNAb Helicase, Chain A"/>
    <property type="match status" value="1"/>
</dbReference>
<dbReference type="Gene3D" id="3.40.50.300">
    <property type="entry name" value="P-loop containing nucleotide triphosphate hydrolases"/>
    <property type="match status" value="1"/>
</dbReference>
<dbReference type="InterPro" id="IPR003593">
    <property type="entry name" value="AAA+_ATPase"/>
</dbReference>
<dbReference type="InterPro" id="IPR036185">
    <property type="entry name" value="DNA_heli_DnaB-like_N_sf"/>
</dbReference>
<dbReference type="InterPro" id="IPR007692">
    <property type="entry name" value="DNA_helicase_DnaB"/>
</dbReference>
<dbReference type="InterPro" id="IPR007694">
    <property type="entry name" value="DNA_helicase_DnaB-like_C"/>
</dbReference>
<dbReference type="InterPro" id="IPR007693">
    <property type="entry name" value="DNA_helicase_DnaB-like_N"/>
</dbReference>
<dbReference type="InterPro" id="IPR016136">
    <property type="entry name" value="DNA_helicase_N/primase_C"/>
</dbReference>
<dbReference type="InterPro" id="IPR027417">
    <property type="entry name" value="P-loop_NTPase"/>
</dbReference>
<dbReference type="NCBIfam" id="TIGR00665">
    <property type="entry name" value="DnaB"/>
    <property type="match status" value="1"/>
</dbReference>
<dbReference type="PANTHER" id="PTHR30153:SF2">
    <property type="entry name" value="REPLICATIVE DNA HELICASE"/>
    <property type="match status" value="1"/>
</dbReference>
<dbReference type="PANTHER" id="PTHR30153">
    <property type="entry name" value="REPLICATIVE DNA HELICASE DNAB"/>
    <property type="match status" value="1"/>
</dbReference>
<dbReference type="Pfam" id="PF00772">
    <property type="entry name" value="DnaB"/>
    <property type="match status" value="1"/>
</dbReference>
<dbReference type="Pfam" id="PF03796">
    <property type="entry name" value="DnaB_C"/>
    <property type="match status" value="1"/>
</dbReference>
<dbReference type="SMART" id="SM00382">
    <property type="entry name" value="AAA"/>
    <property type="match status" value="1"/>
</dbReference>
<dbReference type="SUPFAM" id="SSF48024">
    <property type="entry name" value="N-terminal domain of DnaB helicase"/>
    <property type="match status" value="1"/>
</dbReference>
<dbReference type="SUPFAM" id="SSF52540">
    <property type="entry name" value="P-loop containing nucleoside triphosphate hydrolases"/>
    <property type="match status" value="1"/>
</dbReference>
<dbReference type="PROSITE" id="PS51199">
    <property type="entry name" value="SF4_HELICASE"/>
    <property type="match status" value="1"/>
</dbReference>
<name>DNAB_TRICV</name>
<geneLocation type="chloroplast"/>
<proteinExistence type="inferred from homology"/>